<comment type="function">
    <text evidence="9 10">ATP-dependent chaperone part of the 55LCC heterohexameric ATPase complex which is chromatin-associated and promotes replisome proteostasis to maintain replication fork progression and genome stability. Required for replication fork progression, sister chromatid cohesion, and chromosome stability. The ATPase activity is specifically enhanced by replication fork DNA and is coupled to cysteine protease-dependent cleavage of replisome substrates in response to replication fork damage. Uses ATPase activity to process replisome substrates in S-phase, facilitating their proteolytic turnover from chromatin to ensure DNA replication and mitotic fidelity (PubMed:38554706). Plays an essential role in the cytoplasmic maturation steps of pre-60S ribosomal particles by promoting the release of shuttling protein RSL24D1/RLP24 from the pre-ribosomal particles (PubMed:35354024).</text>
</comment>
<comment type="catalytic activity">
    <reaction evidence="14">
        <text>ATP + H2O = ADP + phosphate + H(+)</text>
        <dbReference type="Rhea" id="RHEA:13065"/>
        <dbReference type="ChEBI" id="CHEBI:15377"/>
        <dbReference type="ChEBI" id="CHEBI:15378"/>
        <dbReference type="ChEBI" id="CHEBI:30616"/>
        <dbReference type="ChEBI" id="CHEBI:43474"/>
        <dbReference type="ChEBI" id="CHEBI:456216"/>
        <dbReference type="EC" id="3.6.4.10"/>
    </reaction>
    <physiologicalReaction direction="left-to-right" evidence="14">
        <dbReference type="Rhea" id="RHEA:13066"/>
    </physiologicalReaction>
</comment>
<comment type="activity regulation">
    <text evidence="10">In the context of 55LCC heterohexameric ATPase complex, the ATPase activity is stimulated by DNA binding and inhibited in presence of RNA.</text>
</comment>
<comment type="subunit">
    <text evidence="9 10">Part of the 55LCC heterohexameric ATPase complex composed at least of AIRIM, AFG2A, AFG2B and CINP (PubMed:35354024, PubMed:38554706). Associates with pre-60S ribosomal particles (PubMed:35354024).</text>
</comment>
<comment type="interaction">
    <interactant intactId="EBI-7950854">
        <id>Q9BVQ7</id>
    </interactant>
    <interactant intactId="EBI-3184062">
        <id>Q8NB90</id>
        <label>AFG2A</label>
    </interactant>
    <organismsDiffer>false</organismsDiffer>
    <experiments>13</experiments>
</comment>
<comment type="interaction">
    <interactant intactId="EBI-7950854">
        <id>Q9BVQ7</id>
    </interactant>
    <interactant intactId="EBI-7950854">
        <id>Q9BVQ7</id>
        <label>AFG2B</label>
    </interactant>
    <organismsDiffer>false</organismsDiffer>
    <experiments>2</experiments>
</comment>
<comment type="subcellular location">
    <subcellularLocation>
        <location evidence="7">Cytoplasm</location>
    </subcellularLocation>
    <subcellularLocation>
        <location evidence="7">Cytoplasm</location>
        <location evidence="7">Cytoskeleton</location>
        <location evidence="7">Spindle</location>
    </subcellularLocation>
    <subcellularLocation>
        <location evidence="1">Nucleus</location>
    </subcellularLocation>
</comment>
<comment type="alternative products">
    <event type="alternative splicing"/>
    <isoform>
        <id>Q9BVQ7-1</id>
        <name>1</name>
        <sequence type="displayed"/>
    </isoform>
    <isoform>
        <id>Q9BVQ7-2</id>
        <name>2</name>
        <sequence type="described" ref="VSP_033052 VSP_033053"/>
    </isoform>
    <isoform>
        <id>Q9BVQ7-3</id>
        <name>3</name>
        <sequence type="described" ref="VSP_033050 VSP_033051"/>
    </isoform>
</comment>
<comment type="tissue specificity">
    <text evidence="8">Expressed in both neurons and glia during embryonic and adult stages of brain development.</text>
</comment>
<comment type="disease" evidence="8 10">
    <disease id="DI-06271">
        <name>Deafness, autosomal recessive, 119</name>
        <acronym>DFNB119</acronym>
        <description>A form of non-syndromic deafness characterized by mild to profound sensorineural hearing loss. Sensorineural hearing loss results from damage to the neural receptors of the inner ear, the nerve pathways to the brain, or the area of the brain that receives sound information.</description>
        <dbReference type="MIM" id="619615"/>
    </disease>
    <text>The disease is caused by variants affecting the gene represented in this entry.</text>
</comment>
<comment type="disease" evidence="8 10">
    <disease id="DI-06272">
        <name>Neurodevelopmental disorder with hearing loss and spasticity</name>
        <acronym>NEDHLS</acronym>
        <description>An autosomal recessive neurodevelopmental disorder characterized by hearing loss, global developmental delay, impaired intellectual development, hypotonia, spastic-dystonic cerebral palsy, focal or generalized epilepsy, and microcephaly.</description>
        <dbReference type="MIM" id="619616"/>
    </disease>
    <text>The disease is caused by variants affecting the gene represented in this entry.</text>
</comment>
<comment type="similarity">
    <text evidence="13">Belongs to the AAA ATPase family. AFG2 subfamily.</text>
</comment>
<keyword id="KW-0002">3D-structure</keyword>
<keyword id="KW-0007">Acetylation</keyword>
<keyword id="KW-0025">Alternative splicing</keyword>
<keyword id="KW-0067">ATP-binding</keyword>
<keyword id="KW-0963">Cytoplasm</keyword>
<keyword id="KW-0206">Cytoskeleton</keyword>
<keyword id="KW-0209">Deafness</keyword>
<keyword id="KW-0887">Epilepsy</keyword>
<keyword id="KW-0378">Hydrolase</keyword>
<keyword id="KW-0991">Intellectual disability</keyword>
<keyword id="KW-1010">Non-syndromic deafness</keyword>
<keyword id="KW-0547">Nucleotide-binding</keyword>
<keyword id="KW-0539">Nucleus</keyword>
<keyword id="KW-1267">Proteomics identification</keyword>
<keyword id="KW-1185">Reference proteome</keyword>
<keyword id="KW-0677">Repeat</keyword>
<keyword id="KW-0690">Ribosome biogenesis</keyword>
<organism>
    <name type="scientific">Homo sapiens</name>
    <name type="common">Human</name>
    <dbReference type="NCBI Taxonomy" id="9606"/>
    <lineage>
        <taxon>Eukaryota</taxon>
        <taxon>Metazoa</taxon>
        <taxon>Chordata</taxon>
        <taxon>Craniata</taxon>
        <taxon>Vertebrata</taxon>
        <taxon>Euteleostomi</taxon>
        <taxon>Mammalia</taxon>
        <taxon>Eutheria</taxon>
        <taxon>Euarchontoglires</taxon>
        <taxon>Primates</taxon>
        <taxon>Haplorrhini</taxon>
        <taxon>Catarrhini</taxon>
        <taxon>Hominidae</taxon>
        <taxon>Homo</taxon>
    </lineage>
</organism>
<name>AFG2B_HUMAN</name>
<reference key="1">
    <citation type="journal article" date="2004" name="Nat. Genet.">
        <title>Complete sequencing and characterization of 21,243 full-length human cDNAs.</title>
        <authorList>
            <person name="Ota T."/>
            <person name="Suzuki Y."/>
            <person name="Nishikawa T."/>
            <person name="Otsuki T."/>
            <person name="Sugiyama T."/>
            <person name="Irie R."/>
            <person name="Wakamatsu A."/>
            <person name="Hayashi K."/>
            <person name="Sato H."/>
            <person name="Nagai K."/>
            <person name="Kimura K."/>
            <person name="Makita H."/>
            <person name="Sekine M."/>
            <person name="Obayashi M."/>
            <person name="Nishi T."/>
            <person name="Shibahara T."/>
            <person name="Tanaka T."/>
            <person name="Ishii S."/>
            <person name="Yamamoto J."/>
            <person name="Saito K."/>
            <person name="Kawai Y."/>
            <person name="Isono Y."/>
            <person name="Nakamura Y."/>
            <person name="Nagahari K."/>
            <person name="Murakami K."/>
            <person name="Yasuda T."/>
            <person name="Iwayanagi T."/>
            <person name="Wagatsuma M."/>
            <person name="Shiratori A."/>
            <person name="Sudo H."/>
            <person name="Hosoiri T."/>
            <person name="Kaku Y."/>
            <person name="Kodaira H."/>
            <person name="Kondo H."/>
            <person name="Sugawara M."/>
            <person name="Takahashi M."/>
            <person name="Kanda K."/>
            <person name="Yokoi T."/>
            <person name="Furuya T."/>
            <person name="Kikkawa E."/>
            <person name="Omura Y."/>
            <person name="Abe K."/>
            <person name="Kamihara K."/>
            <person name="Katsuta N."/>
            <person name="Sato K."/>
            <person name="Tanikawa M."/>
            <person name="Yamazaki M."/>
            <person name="Ninomiya K."/>
            <person name="Ishibashi T."/>
            <person name="Yamashita H."/>
            <person name="Murakawa K."/>
            <person name="Fujimori K."/>
            <person name="Tanai H."/>
            <person name="Kimata M."/>
            <person name="Watanabe M."/>
            <person name="Hiraoka S."/>
            <person name="Chiba Y."/>
            <person name="Ishida S."/>
            <person name="Ono Y."/>
            <person name="Takiguchi S."/>
            <person name="Watanabe S."/>
            <person name="Yosida M."/>
            <person name="Hotuta T."/>
            <person name="Kusano J."/>
            <person name="Kanehori K."/>
            <person name="Takahashi-Fujii A."/>
            <person name="Hara H."/>
            <person name="Tanase T.-O."/>
            <person name="Nomura Y."/>
            <person name="Togiya S."/>
            <person name="Komai F."/>
            <person name="Hara R."/>
            <person name="Takeuchi K."/>
            <person name="Arita M."/>
            <person name="Imose N."/>
            <person name="Musashino K."/>
            <person name="Yuuki H."/>
            <person name="Oshima A."/>
            <person name="Sasaki N."/>
            <person name="Aotsuka S."/>
            <person name="Yoshikawa Y."/>
            <person name="Matsunawa H."/>
            <person name="Ichihara T."/>
            <person name="Shiohata N."/>
            <person name="Sano S."/>
            <person name="Moriya S."/>
            <person name="Momiyama H."/>
            <person name="Satoh N."/>
            <person name="Takami S."/>
            <person name="Terashima Y."/>
            <person name="Suzuki O."/>
            <person name="Nakagawa S."/>
            <person name="Senoh A."/>
            <person name="Mizoguchi H."/>
            <person name="Goto Y."/>
            <person name="Shimizu F."/>
            <person name="Wakebe H."/>
            <person name="Hishigaki H."/>
            <person name="Watanabe T."/>
            <person name="Sugiyama A."/>
            <person name="Takemoto M."/>
            <person name="Kawakami B."/>
            <person name="Yamazaki M."/>
            <person name="Watanabe K."/>
            <person name="Kumagai A."/>
            <person name="Itakura S."/>
            <person name="Fukuzumi Y."/>
            <person name="Fujimori Y."/>
            <person name="Komiyama M."/>
            <person name="Tashiro H."/>
            <person name="Tanigami A."/>
            <person name="Fujiwara T."/>
            <person name="Ono T."/>
            <person name="Yamada K."/>
            <person name="Fujii Y."/>
            <person name="Ozaki K."/>
            <person name="Hirao M."/>
            <person name="Ohmori Y."/>
            <person name="Kawabata A."/>
            <person name="Hikiji T."/>
            <person name="Kobatake N."/>
            <person name="Inagaki H."/>
            <person name="Ikema Y."/>
            <person name="Okamoto S."/>
            <person name="Okitani R."/>
            <person name="Kawakami T."/>
            <person name="Noguchi S."/>
            <person name="Itoh T."/>
            <person name="Shigeta K."/>
            <person name="Senba T."/>
            <person name="Matsumura K."/>
            <person name="Nakajima Y."/>
            <person name="Mizuno T."/>
            <person name="Morinaga M."/>
            <person name="Sasaki M."/>
            <person name="Togashi T."/>
            <person name="Oyama M."/>
            <person name="Hata H."/>
            <person name="Watanabe M."/>
            <person name="Komatsu T."/>
            <person name="Mizushima-Sugano J."/>
            <person name="Satoh T."/>
            <person name="Shirai Y."/>
            <person name="Takahashi Y."/>
            <person name="Nakagawa K."/>
            <person name="Okumura K."/>
            <person name="Nagase T."/>
            <person name="Nomura N."/>
            <person name="Kikuchi H."/>
            <person name="Masuho Y."/>
            <person name="Yamashita R."/>
            <person name="Nakai K."/>
            <person name="Yada T."/>
            <person name="Nakamura Y."/>
            <person name="Ohara O."/>
            <person name="Isogai T."/>
            <person name="Sugano S."/>
        </authorList>
    </citation>
    <scope>NUCLEOTIDE SEQUENCE [LARGE SCALE MRNA] (ISOFORMS 2 AND 3)</scope>
    <scope>VARIANT GLN-252</scope>
    <source>
        <tissue>Mammary gland</tissue>
    </source>
</reference>
<reference key="2">
    <citation type="journal article" date="2006" name="Nature">
        <title>Analysis of the DNA sequence and duplication history of human chromosome 15.</title>
        <authorList>
            <person name="Zody M.C."/>
            <person name="Garber M."/>
            <person name="Sharpe T."/>
            <person name="Young S.K."/>
            <person name="Rowen L."/>
            <person name="O'Neill K."/>
            <person name="Whittaker C.A."/>
            <person name="Kamal M."/>
            <person name="Chang J.L."/>
            <person name="Cuomo C.A."/>
            <person name="Dewar K."/>
            <person name="FitzGerald M.G."/>
            <person name="Kodira C.D."/>
            <person name="Madan A."/>
            <person name="Qin S."/>
            <person name="Yang X."/>
            <person name="Abbasi N."/>
            <person name="Abouelleil A."/>
            <person name="Arachchi H.M."/>
            <person name="Baradarani L."/>
            <person name="Birditt B."/>
            <person name="Bloom S."/>
            <person name="Bloom T."/>
            <person name="Borowsky M.L."/>
            <person name="Burke J."/>
            <person name="Butler J."/>
            <person name="Cook A."/>
            <person name="DeArellano K."/>
            <person name="DeCaprio D."/>
            <person name="Dorris L. III"/>
            <person name="Dors M."/>
            <person name="Eichler E.E."/>
            <person name="Engels R."/>
            <person name="Fahey J."/>
            <person name="Fleetwood P."/>
            <person name="Friedman C."/>
            <person name="Gearin G."/>
            <person name="Hall J.L."/>
            <person name="Hensley G."/>
            <person name="Johnson E."/>
            <person name="Jones C."/>
            <person name="Kamat A."/>
            <person name="Kaur A."/>
            <person name="Locke D.P."/>
            <person name="Madan A."/>
            <person name="Munson G."/>
            <person name="Jaffe D.B."/>
            <person name="Lui A."/>
            <person name="Macdonald P."/>
            <person name="Mauceli E."/>
            <person name="Naylor J.W."/>
            <person name="Nesbitt R."/>
            <person name="Nicol R."/>
            <person name="O'Leary S.B."/>
            <person name="Ratcliffe A."/>
            <person name="Rounsley S."/>
            <person name="She X."/>
            <person name="Sneddon K.M.B."/>
            <person name="Stewart S."/>
            <person name="Sougnez C."/>
            <person name="Stone S.M."/>
            <person name="Topham K."/>
            <person name="Vincent D."/>
            <person name="Wang S."/>
            <person name="Zimmer A.R."/>
            <person name="Birren B.W."/>
            <person name="Hood L."/>
            <person name="Lander E.S."/>
            <person name="Nusbaum C."/>
        </authorList>
    </citation>
    <scope>NUCLEOTIDE SEQUENCE [LARGE SCALE GENOMIC DNA]</scope>
</reference>
<reference key="3">
    <citation type="journal article" date="2004" name="Genome Res.">
        <title>The status, quality, and expansion of the NIH full-length cDNA project: the Mammalian Gene Collection (MGC).</title>
        <authorList>
            <consortium name="The MGC Project Team"/>
        </authorList>
    </citation>
    <scope>NUCLEOTIDE SEQUENCE [LARGE SCALE MRNA] (ISOFORM 1)</scope>
    <scope>VARIANT GLN-252</scope>
    <source>
        <tissue>Cervix</tissue>
    </source>
</reference>
<reference key="4">
    <citation type="journal article" date="2008" name="J. Cell Sci.">
        <title>EML3 is a nuclear microtubule-binding protein required for the correct alignment of chromosomes in metaphase.</title>
        <authorList>
            <person name="Tegha-Dunghu J."/>
            <person name="Neumann B."/>
            <person name="Reber S."/>
            <person name="Krause R."/>
            <person name="Erfle H."/>
            <person name="Walter T."/>
            <person name="Held M."/>
            <person name="Rogers P."/>
            <person name="Hupfeld K."/>
            <person name="Ruppert T."/>
            <person name="Ellenberg J."/>
            <person name="Gruss O.J."/>
        </authorList>
    </citation>
    <scope>SUBCELLULAR LOCATION</scope>
</reference>
<reference key="5">
    <citation type="journal article" date="2011" name="BMC Syst. Biol.">
        <title>Initial characterization of the human central proteome.</title>
        <authorList>
            <person name="Burkard T.R."/>
            <person name="Planyavsky M."/>
            <person name="Kaupe I."/>
            <person name="Breitwieser F.P."/>
            <person name="Buerckstuemmer T."/>
            <person name="Bennett K.L."/>
            <person name="Superti-Furga G."/>
            <person name="Colinge J."/>
        </authorList>
    </citation>
    <scope>IDENTIFICATION BY MASS SPECTROMETRY [LARGE SCALE ANALYSIS]</scope>
</reference>
<reference key="6">
    <citation type="journal article" date="2012" name="Proc. Natl. Acad. Sci. U.S.A.">
        <title>N-terminal acetylome analyses and functional insights of the N-terminal acetyltransferase NatB.</title>
        <authorList>
            <person name="Van Damme P."/>
            <person name="Lasa M."/>
            <person name="Polevoda B."/>
            <person name="Gazquez C."/>
            <person name="Elosegui-Artola A."/>
            <person name="Kim D.S."/>
            <person name="De Juan-Pardo E."/>
            <person name="Demeyer K."/>
            <person name="Hole K."/>
            <person name="Larrea E."/>
            <person name="Timmerman E."/>
            <person name="Prieto J."/>
            <person name="Arnesen T."/>
            <person name="Sherman F."/>
            <person name="Gevaert K."/>
            <person name="Aldabe R."/>
        </authorList>
    </citation>
    <scope>ACETYLATION [LARGE SCALE ANALYSIS] AT MET-1</scope>
    <scope>IDENTIFICATION BY MASS SPECTROMETRY [LARGE SCALE ANALYSIS]</scope>
</reference>
<reference key="7">
    <citation type="journal article" date="2021" name="Am. J. Hum. Genet.">
        <title>Bi-allelic variants in SPATA5L1 lead to intellectual disability, spastic-dystonic cerebral palsy, epilepsy, and hearing loss.</title>
        <authorList>
            <person name="Richard E.M."/>
            <person name="Bakhtiari S."/>
            <person name="Marsh A.P.L."/>
            <person name="Kaiyrzhanov R."/>
            <person name="Wagner M."/>
            <person name="Shetty S."/>
            <person name="Pagnozzi A."/>
            <person name="Nordlie S.M."/>
            <person name="Guida B.S."/>
            <person name="Cornejo P."/>
            <person name="Magee H."/>
            <person name="Liu J."/>
            <person name="Norton B.Y."/>
            <person name="Webster R.I."/>
            <person name="Worgan L."/>
            <person name="Hakonarson H."/>
            <person name="Li J."/>
            <person name="Guo Y."/>
            <person name="Jain M."/>
            <person name="Blesson A."/>
            <person name="Rodan L.H."/>
            <person name="Abbott M.A."/>
            <person name="Comi A."/>
            <person name="Cohen J.S."/>
            <person name="Alhaddad B."/>
            <person name="Meitinger T."/>
            <person name="Lenz D."/>
            <person name="Ziegler A."/>
            <person name="Kotzaeridou U."/>
            <person name="Brunet T."/>
            <person name="Chassevent A."/>
            <person name="Smith-Hicks C."/>
            <person name="Ekstein J."/>
            <person name="Weiden T."/>
            <person name="Hahn A."/>
            <person name="Zharkinbekova N."/>
            <person name="Turnpenny P."/>
            <person name="Tucci A."/>
            <person name="Yelton M."/>
            <person name="Horvath R."/>
            <person name="Gungor S."/>
            <person name="Hiz S."/>
            <person name="Oktay Y."/>
            <person name="Lochmuller H."/>
            <person name="Zollino M."/>
            <person name="Morleo M."/>
            <person name="Marangi G."/>
            <person name="Nigro V."/>
            <person name="Torella A."/>
            <person name="Pinelli M."/>
            <person name="Amenta S."/>
            <person name="Husain R.A."/>
            <person name="Grossmann B."/>
            <person name="Rapp M."/>
            <person name="Steen C."/>
            <person name="Marquardt I."/>
            <person name="Grimmel M."/>
            <person name="Grasshoff U."/>
            <person name="Korenke G.C."/>
            <person name="Owczarek-Lipska M."/>
            <person name="Neidhardt J."/>
            <person name="Radio F.C."/>
            <person name="Mancini C."/>
            <person name="Claps Sepulveda D.J."/>
            <person name="McWalter K."/>
            <person name="Begtrup A."/>
            <person name="Crunk A."/>
            <person name="Guillen Sacoto M.J."/>
            <person name="Person R."/>
            <person name="Schnur R.E."/>
            <person name="Mancardi M.M."/>
            <person name="Kreuder F."/>
            <person name="Striano P."/>
            <person name="Zara F."/>
            <person name="Chung W.K."/>
            <person name="Marks W.A."/>
            <person name="van Eyk C.L."/>
            <person name="Webber D.L."/>
            <person name="Corbett M.A."/>
            <person name="Harper K."/>
            <person name="Berry J.G."/>
            <person name="MacLennan A.H."/>
            <person name="Gecz J."/>
            <person name="Tartaglia M."/>
            <person name="Salpietro V."/>
            <person name="Christodoulou J."/>
            <person name="Kaslin J."/>
            <person name="Padilla-Lopez S."/>
            <person name="Bilguvar K."/>
            <person name="Munchau A."/>
            <person name="Ahmed Z.M."/>
            <person name="Hufnagel R.B."/>
            <person name="Fahey M.C."/>
            <person name="Maroofian R."/>
            <person name="Houlden H."/>
            <person name="Sticht H."/>
            <person name="Mane S.M."/>
            <person name="Rad A."/>
            <person name="Vona B."/>
            <person name="Jin S.C."/>
            <person name="Haack T.B."/>
            <person name="Makowski C."/>
            <person name="Hirsch Y."/>
            <person name="Riazuddin S."/>
            <person name="Kruer M.C."/>
        </authorList>
    </citation>
    <scope>INVOLVEMENT IN DFNB119</scope>
    <scope>INVOLVEMENT IN NEDHLS</scope>
    <scope>VARIANTS DFNB119 VAL-176 AND MET-466</scope>
    <scope>VARIANTS NEDHLS ALA-26; GLY-29; PRO-41; TRP-64; TYR-66; LEU-71; HIS-172; GLU-245; SER-360; GLU-364; ILE-400; PRO-438; ASP-519; SER-561; 609-SER--ILE-753 DEL; 640-ARG--ILE-753 DEL; LYS-658; ARG-669 AND VAL-689</scope>
    <scope>TISSUE SPECIFICITY</scope>
</reference>
<reference key="8">
    <citation type="journal article" date="2022" name="Cell Rep.">
        <title>Labeling of heterochronic ribosomes reveals C1ORF109 and SPATA5 control a late step in human ribosome assembly.</title>
        <authorList>
            <person name="Ni C."/>
            <person name="Schmitz D.A."/>
            <person name="Lee J."/>
            <person name="Pawlowski K."/>
            <person name="Wu J."/>
            <person name="Buszczak M."/>
        </authorList>
    </citation>
    <scope>FUNCTION</scope>
    <scope>INTERACTION WITH AIRIM</scope>
    <scope>INTERACTION WITH PRE-60S RIBOSOMAL PARTICLES</scope>
</reference>
<reference key="9">
    <citation type="journal article" date="2024" name="Cell">
        <title>The SPATA5-SPATA5L1 ATPase complex directs replisome proteostasis to ensure genome integrity.</title>
        <authorList>
            <person name="Krishnamoorthy V."/>
            <person name="Foglizzo M."/>
            <person name="Dilley R.L."/>
            <person name="Wu A."/>
            <person name="Datta A."/>
            <person name="Dutta P."/>
            <person name="Campbell L.J."/>
            <person name="Degtjarik O."/>
            <person name="Musgrove L.J."/>
            <person name="Calabrese A.N."/>
            <person name="Zeqiraj E."/>
            <person name="Greenberg R.A."/>
        </authorList>
    </citation>
    <scope>FUNCTION</scope>
    <scope>SUBUNIT</scope>
    <scope>CHARACTERIZATION OF VARIANT DFNB119 MET-466</scope>
    <scope>CHARACTERIZATION OF VARIANTS NEDHLS PRO-41; TRP-64; TYR-66; GLU-245 AND VAL-689</scope>
    <scope>CATALYTIC ACTIVITY</scope>
    <scope>ACTIVITY REGULATION</scope>
</reference>
<gene>
    <name evidence="15" type="primary">AFG2B</name>
    <name evidence="12" type="synonym">SPATA5L1</name>
</gene>
<sequence length="753" mass="80710">MAPDSDPFPEGPLLKLLPLDARDRGTQRCRLGPAALHALGARLGSAVKISLPDGGSCLCTAWPRRDGADGFVQLDPLCASPGAAVGASRSRRSLSLNRLLLVPCPPLRRVAVWPVLRERAGAPGARNTAAVLEAAQELLRNRPISLGHVVVAPPGAPGLVAALHIVGGTPSPDPAGLVTPRTRVSLGGEPPSEAQPQPEVPLGGLSEAADSLRELLRLPLRYPRALTALGLAVPRGVLLAGPPGVGKTQLVRAVAREAGAELLAVSAPALQGSRPGETEENVRRVFQRARELASRGPSLLFLDEMDALCPQRGSRAPESRVVAQVLTLLDGASGDREVVVVGATNRPDALDPALRRPGRFDREVVIGTPTLKQRKEILQVITSKMPISSHVDLGLLAEMTVGYVGADLTALCREAAMHALLHSEKNQDNPVIDEIDFLEAFKNIQPSSFRSVIGLMDIKPVDWEEIGGLEDVKLKLKQSIEWPLKFPWEFVRMGLTQPKGVLLYGPPGCAKTTLVRALATSCHCSFVSVSGADLFSPFVGDSEKVLSQIFRQARASTPAILFLDEIDSILGARSASKTGCDVQERVLSVLLNELDGVGLKTIERRGSKSSQQEFQEVFNRSVMIIAATNRPDVLDTALLRPGRLDKIIYIPPPDHKGRLSILKVCTKTMPIGPDVSLENLAAETCFFSGADLRNLCTEAALLALQENGLDATTVKQEHFLKSLKTVKPSLSCKDLALYENLFKKEGFSNVEGI</sequence>
<protein>
    <recommendedName>
        <fullName>ATPase family gene 2 protein homolog B</fullName>
        <ecNumber evidence="2">3.6.4.10</ecNumber>
    </recommendedName>
    <alternativeName>
        <fullName>AFG2 AAA ATPase homolog B</fullName>
    </alternativeName>
    <alternativeName>
        <fullName evidence="13">Ribosome biogenesis protein SPATA5L1</fullName>
    </alternativeName>
    <alternativeName>
        <fullName>Spermatogenesis-associated protein 5-like protein 1</fullName>
    </alternativeName>
</protein>
<proteinExistence type="evidence at protein level"/>
<feature type="chain" id="PRO_0000330586" description="ATPase family gene 2 protein homolog B">
    <location>
        <begin position="1"/>
        <end position="753"/>
    </location>
</feature>
<feature type="region of interest" description="Required for interaction with AFG2A and CINP" evidence="10">
    <location>
        <begin position="1"/>
        <end position="189"/>
    </location>
</feature>
<feature type="region of interest" description="Disordered" evidence="4">
    <location>
        <begin position="171"/>
        <end position="203"/>
    </location>
</feature>
<feature type="binding site" evidence="3">
    <location>
        <begin position="241"/>
        <end position="248"/>
    </location>
    <ligand>
        <name>ATP</name>
        <dbReference type="ChEBI" id="CHEBI:30616"/>
        <label>1</label>
    </ligand>
</feature>
<feature type="binding site" evidence="3">
    <location>
        <begin position="505"/>
        <end position="512"/>
    </location>
    <ligand>
        <name>ATP</name>
        <dbReference type="ChEBI" id="CHEBI:30616"/>
        <label>2</label>
    </ligand>
</feature>
<feature type="modified residue" description="N-acetylmethionine" evidence="16">
    <location>
        <position position="1"/>
    </location>
</feature>
<feature type="splice variant" id="VSP_033050" description="In isoform 3." evidence="11">
    <original>VIGTPTLKQRKEILQVITSKMPISSHVD</original>
    <variation>NGLGGFAHCRWNLGRFWRHLAAPEAFAS</variation>
    <location>
        <begin position="365"/>
        <end position="392"/>
    </location>
</feature>
<feature type="splice variant" id="VSP_033051" description="In isoform 3." evidence="11">
    <location>
        <begin position="393"/>
        <end position="753"/>
    </location>
</feature>
<feature type="splice variant" id="VSP_033052" description="In isoform 2." evidence="11">
    <original>EFQEVFNR</original>
    <variation>GKYKELKK</variation>
    <location>
        <begin position="613"/>
        <end position="620"/>
    </location>
</feature>
<feature type="splice variant" id="VSP_033053" description="In isoform 2." evidence="11">
    <location>
        <begin position="621"/>
        <end position="753"/>
    </location>
</feature>
<feature type="sequence variant" id="VAR_086544" description="In NEDHLS." evidence="8">
    <original>T</original>
    <variation>A</variation>
    <location>
        <position position="26"/>
    </location>
</feature>
<feature type="sequence variant" id="VAR_086545" description="In NEDHLS." evidence="8">
    <original>C</original>
    <variation>G</variation>
    <location>
        <position position="29"/>
    </location>
</feature>
<feature type="sequence variant" id="VAR_086546" description="In NEDHLS; reduces interaction with AFG2A and CINP; reduces cell viability." evidence="8 10">
    <original>A</original>
    <variation>P</variation>
    <location>
        <position position="41"/>
    </location>
</feature>
<feature type="sequence variant" id="VAR_086547" description="In NEDHLS; strongly reduces interaction with AFG2A and CINP; reduces cell viability." evidence="8 10">
    <original>R</original>
    <variation>W</variation>
    <location>
        <position position="64"/>
    </location>
</feature>
<feature type="sequence variant" id="VAR_086548" description="In NEDHLS; reduces interaction with AFG2A and CINP; reduces cell viability." evidence="8 10">
    <original>D</original>
    <variation>Y</variation>
    <location>
        <position position="66"/>
    </location>
</feature>
<feature type="sequence variant" id="VAR_086549" description="In NEDHLS." evidence="8">
    <original>F</original>
    <variation>L</variation>
    <location>
        <position position="71"/>
    </location>
</feature>
<feature type="sequence variant" id="VAR_048111" description="In dbSNP:rs1153850.">
    <original>R</original>
    <variation>P</variation>
    <location>
        <position position="119"/>
    </location>
</feature>
<feature type="sequence variant" id="VAR_086550" description="In NEDHLS." evidence="8">
    <original>P</original>
    <variation>H</variation>
    <location>
        <position position="172"/>
    </location>
</feature>
<feature type="sequence variant" id="VAR_086551" description="In DFNB119." evidence="8">
    <original>G</original>
    <variation>V</variation>
    <location>
        <position position="176"/>
    </location>
</feature>
<feature type="sequence variant" id="VAR_086552" description="In NEDHLS; no effect on interaction with AFG2A and CINP; strongly reduces cell viability." evidence="8 10">
    <original>V</original>
    <variation>E</variation>
    <location>
        <position position="245"/>
    </location>
</feature>
<feature type="sequence variant" id="VAR_059085" description="In dbSNP:rs7182723." evidence="5 6">
    <original>R</original>
    <variation>Q</variation>
    <location>
        <position position="252"/>
    </location>
</feature>
<feature type="sequence variant" id="VAR_086553" description="In NEDHLS." evidence="8">
    <original>F</original>
    <variation>S</variation>
    <location>
        <position position="360"/>
    </location>
</feature>
<feature type="sequence variant" id="VAR_086554" description="In NEDHLS." evidence="8">
    <original>V</original>
    <variation>E</variation>
    <location>
        <position position="364"/>
    </location>
</feature>
<feature type="sequence variant" id="VAR_086555" description="In NEDHLS." evidence="8">
    <original>T</original>
    <variation>I</variation>
    <location>
        <position position="400"/>
    </location>
</feature>
<feature type="sequence variant" id="VAR_086556" description="In NEDHLS." evidence="8">
    <original>L</original>
    <variation>P</variation>
    <location>
        <position position="438"/>
    </location>
</feature>
<feature type="sequence variant" id="VAR_086557" description="In DFNB119; no effect on interaction with AFG2A and CINP; reduces cell viability." evidence="8 10">
    <original>I</original>
    <variation>M</variation>
    <location>
        <position position="466"/>
    </location>
</feature>
<feature type="sequence variant" id="VAR_086558" description="In NEDHLS." evidence="8">
    <original>A</original>
    <variation>D</variation>
    <location>
        <position position="519"/>
    </location>
</feature>
<feature type="sequence variant" id="VAR_086559" description="In NEDHLS." evidence="8">
    <original>L</original>
    <variation>S</variation>
    <location>
        <position position="561"/>
    </location>
</feature>
<feature type="sequence variant" id="VAR_048112" description="In dbSNP:rs16943025.">
    <original>N</original>
    <variation>D</variation>
    <location>
        <position position="592"/>
    </location>
</feature>
<feature type="sequence variant" id="VAR_086560" description="In NEDHLS." evidence="8">
    <location>
        <begin position="609"/>
        <end position="753"/>
    </location>
</feature>
<feature type="sequence variant" id="VAR_086561" description="In NEDHLS." evidence="8">
    <location>
        <begin position="640"/>
        <end position="753"/>
    </location>
</feature>
<feature type="sequence variant" id="VAR_086562" description="In NEDHLS." evidence="8">
    <original>R</original>
    <variation>K</variation>
    <location>
        <position position="658"/>
    </location>
</feature>
<feature type="sequence variant" id="VAR_086563" description="In NEDHLS." evidence="8">
    <original>M</original>
    <variation>R</variation>
    <location>
        <position position="669"/>
    </location>
</feature>
<feature type="sequence variant" id="VAR_086564" description="In NEDHLS; no effect on interaction with AFG2A and CINP; reduces cell viability." evidence="8 10">
    <original>G</original>
    <variation>V</variation>
    <location>
        <position position="689"/>
    </location>
</feature>
<feature type="sequence conflict" description="In Ref. 1; BAB14017." evidence="13" ref="1">
    <original>E</original>
    <variation>G</variation>
    <location>
        <position position="257"/>
    </location>
</feature>
<dbReference type="EC" id="3.6.4.10" evidence="2"/>
<dbReference type="EMBL" id="AK022348">
    <property type="protein sequence ID" value="BAB14017.1"/>
    <property type="molecule type" value="mRNA"/>
</dbReference>
<dbReference type="EMBL" id="AK023232">
    <property type="protein sequence ID" value="BAB14482.1"/>
    <property type="molecule type" value="mRNA"/>
</dbReference>
<dbReference type="EMBL" id="AK291457">
    <property type="protein sequence ID" value="BAF84146.1"/>
    <property type="molecule type" value="mRNA"/>
</dbReference>
<dbReference type="EMBL" id="AC025580">
    <property type="status" value="NOT_ANNOTATED_CDS"/>
    <property type="molecule type" value="Genomic_DNA"/>
</dbReference>
<dbReference type="EMBL" id="AC090527">
    <property type="status" value="NOT_ANNOTATED_CDS"/>
    <property type="molecule type" value="Genomic_DNA"/>
</dbReference>
<dbReference type="EMBL" id="BC000981">
    <property type="protein sequence ID" value="AAH00981.1"/>
    <property type="molecule type" value="mRNA"/>
</dbReference>
<dbReference type="CCDS" id="CCDS10123.1">
    <molecule id="Q9BVQ7-1"/>
</dbReference>
<dbReference type="CCDS" id="CCDS81877.1">
    <molecule id="Q9BVQ7-2"/>
</dbReference>
<dbReference type="RefSeq" id="NP_001310569.1">
    <molecule id="Q9BVQ7-2"/>
    <property type="nucleotide sequence ID" value="NM_001323640.2"/>
</dbReference>
<dbReference type="RefSeq" id="NP_076968.2">
    <molecule id="Q9BVQ7-1"/>
    <property type="nucleotide sequence ID" value="NM_024063.3"/>
</dbReference>
<dbReference type="PDB" id="8RHN">
    <property type="method" value="EM"/>
    <property type="resolution" value="4.50 A"/>
    <property type="chains" value="I/J/O/P=1-753"/>
</dbReference>
<dbReference type="PDBsum" id="8RHN"/>
<dbReference type="EMDB" id="EMD-19177"/>
<dbReference type="SMR" id="Q9BVQ7"/>
<dbReference type="BioGRID" id="122496">
    <property type="interactions" value="128"/>
</dbReference>
<dbReference type="ComplexPortal" id="CPX-9182">
    <property type="entry name" value="SPATA5-SPATA5L1 ATPase complex"/>
</dbReference>
<dbReference type="FunCoup" id="Q9BVQ7">
    <property type="interactions" value="856"/>
</dbReference>
<dbReference type="IntAct" id="Q9BVQ7">
    <property type="interactions" value="1301"/>
</dbReference>
<dbReference type="MINT" id="Q9BVQ7"/>
<dbReference type="STRING" id="9606.ENSP00000305494"/>
<dbReference type="GlyGen" id="Q9BVQ7">
    <property type="glycosylation" value="1 site"/>
</dbReference>
<dbReference type="iPTMnet" id="Q9BVQ7"/>
<dbReference type="PhosphoSitePlus" id="Q9BVQ7"/>
<dbReference type="SwissPalm" id="Q9BVQ7"/>
<dbReference type="BioMuta" id="SPATA5L1"/>
<dbReference type="DMDM" id="292495038"/>
<dbReference type="jPOST" id="Q9BVQ7"/>
<dbReference type="MassIVE" id="Q9BVQ7"/>
<dbReference type="PaxDb" id="9606-ENSP00000305494"/>
<dbReference type="PeptideAtlas" id="Q9BVQ7"/>
<dbReference type="ProteomicsDB" id="79225">
    <molecule id="Q9BVQ7-1"/>
</dbReference>
<dbReference type="ProteomicsDB" id="79226">
    <molecule id="Q9BVQ7-2"/>
</dbReference>
<dbReference type="ProteomicsDB" id="79227">
    <molecule id="Q9BVQ7-3"/>
</dbReference>
<dbReference type="Pumba" id="Q9BVQ7"/>
<dbReference type="Antibodypedia" id="24428">
    <property type="antibodies" value="110 antibodies from 22 providers"/>
</dbReference>
<dbReference type="DNASU" id="79029"/>
<dbReference type="Ensembl" id="ENST00000305560.11">
    <molecule id="Q9BVQ7-1"/>
    <property type="protein sequence ID" value="ENSP00000305494.6"/>
    <property type="gene ID" value="ENSG00000171763.20"/>
</dbReference>
<dbReference type="Ensembl" id="ENST00000531970.5">
    <molecule id="Q9BVQ7-2"/>
    <property type="protein sequence ID" value="ENSP00000436823.1"/>
    <property type="gene ID" value="ENSG00000171763.20"/>
</dbReference>
<dbReference type="GeneID" id="79029"/>
<dbReference type="KEGG" id="hsa:79029"/>
<dbReference type="MANE-Select" id="ENST00000305560.11">
    <property type="protein sequence ID" value="ENSP00000305494.6"/>
    <property type="RefSeq nucleotide sequence ID" value="NM_024063.3"/>
    <property type="RefSeq protein sequence ID" value="NP_076968.2"/>
</dbReference>
<dbReference type="UCSC" id="uc001zve.4">
    <molecule id="Q9BVQ7-1"/>
    <property type="organism name" value="human"/>
</dbReference>
<dbReference type="AGR" id="HGNC:28762"/>
<dbReference type="CTD" id="79029"/>
<dbReference type="DisGeNET" id="79029"/>
<dbReference type="GeneCards" id="AFG2B"/>
<dbReference type="HGNC" id="HGNC:28762">
    <property type="gene designation" value="AFG2B"/>
</dbReference>
<dbReference type="HPA" id="ENSG00000171763">
    <property type="expression patterns" value="Low tissue specificity"/>
</dbReference>
<dbReference type="MalaCards" id="AFG2B"/>
<dbReference type="MIM" id="619578">
    <property type="type" value="gene"/>
</dbReference>
<dbReference type="MIM" id="619615">
    <property type="type" value="phenotype"/>
</dbReference>
<dbReference type="MIM" id="619616">
    <property type="type" value="phenotype"/>
</dbReference>
<dbReference type="neXtProt" id="NX_Q9BVQ7"/>
<dbReference type="OpenTargets" id="ENSG00000171763"/>
<dbReference type="Orphanet" id="90636">
    <property type="disease" value="Rare autosomal recessive non-syndromic sensorineural deafness type DFNB"/>
</dbReference>
<dbReference type="Orphanet" id="659975">
    <property type="disease" value="Sensorineural hearing loss-spastic quadriplegia-intellectual disability syndrome"/>
</dbReference>
<dbReference type="PharmGKB" id="PA134923477"/>
<dbReference type="VEuPathDB" id="HostDB:ENSG00000171763"/>
<dbReference type="eggNOG" id="KOG0730">
    <property type="taxonomic scope" value="Eukaryota"/>
</dbReference>
<dbReference type="GeneTree" id="ENSGT00940000160700"/>
<dbReference type="HOGENOM" id="CLU_000688_12_2_1"/>
<dbReference type="InParanoid" id="Q9BVQ7"/>
<dbReference type="OMA" id="DRHIYVA"/>
<dbReference type="OrthoDB" id="11264at9604"/>
<dbReference type="PAN-GO" id="Q9BVQ7">
    <property type="GO annotations" value="1 GO annotation based on evolutionary models"/>
</dbReference>
<dbReference type="PhylomeDB" id="Q9BVQ7"/>
<dbReference type="TreeFam" id="TF325792"/>
<dbReference type="PathwayCommons" id="Q9BVQ7"/>
<dbReference type="SignaLink" id="Q9BVQ7"/>
<dbReference type="BioGRID-ORCS" id="79029">
    <property type="hits" value="707 hits in 1152 CRISPR screens"/>
</dbReference>
<dbReference type="ChiTaRS" id="SPATA5L1">
    <property type="organism name" value="human"/>
</dbReference>
<dbReference type="GenomeRNAi" id="79029"/>
<dbReference type="Pharos" id="Q9BVQ7">
    <property type="development level" value="Tdark"/>
</dbReference>
<dbReference type="PRO" id="PR:Q9BVQ7"/>
<dbReference type="Proteomes" id="UP000005640">
    <property type="component" value="Chromosome 15"/>
</dbReference>
<dbReference type="RNAct" id="Q9BVQ7">
    <property type="molecule type" value="protein"/>
</dbReference>
<dbReference type="Bgee" id="ENSG00000171763">
    <property type="expression patterns" value="Expressed in lower esophagus mucosa and 185 other cell types or tissues"/>
</dbReference>
<dbReference type="ExpressionAtlas" id="Q9BVQ7">
    <property type="expression patterns" value="baseline and differential"/>
</dbReference>
<dbReference type="GO" id="GO:0005737">
    <property type="term" value="C:cytoplasm"/>
    <property type="evidence" value="ECO:0000314"/>
    <property type="project" value="UniProtKB"/>
</dbReference>
<dbReference type="GO" id="GO:0005829">
    <property type="term" value="C:cytosol"/>
    <property type="evidence" value="ECO:0000318"/>
    <property type="project" value="GO_Central"/>
</dbReference>
<dbReference type="GO" id="GO:0005634">
    <property type="term" value="C:nucleus"/>
    <property type="evidence" value="ECO:0000318"/>
    <property type="project" value="GO_Central"/>
</dbReference>
<dbReference type="GO" id="GO:0005819">
    <property type="term" value="C:spindle"/>
    <property type="evidence" value="ECO:0000314"/>
    <property type="project" value="UniProtKB"/>
</dbReference>
<dbReference type="GO" id="GO:0034098">
    <property type="term" value="C:VCP-NPL4-UFD1 AAA ATPase complex"/>
    <property type="evidence" value="ECO:0000318"/>
    <property type="project" value="GO_Central"/>
</dbReference>
<dbReference type="GO" id="GO:0005524">
    <property type="term" value="F:ATP binding"/>
    <property type="evidence" value="ECO:0007669"/>
    <property type="project" value="UniProtKB-KW"/>
</dbReference>
<dbReference type="GO" id="GO:0016887">
    <property type="term" value="F:ATP hydrolysis activity"/>
    <property type="evidence" value="ECO:0000318"/>
    <property type="project" value="GO_Central"/>
</dbReference>
<dbReference type="GO" id="GO:0042802">
    <property type="term" value="F:identical protein binding"/>
    <property type="evidence" value="ECO:0000353"/>
    <property type="project" value="IntAct"/>
</dbReference>
<dbReference type="GO" id="GO:0031593">
    <property type="term" value="F:polyubiquitin modification-dependent protein binding"/>
    <property type="evidence" value="ECO:0000318"/>
    <property type="project" value="GO_Central"/>
</dbReference>
<dbReference type="GO" id="GO:1990275">
    <property type="term" value="F:preribosome binding"/>
    <property type="evidence" value="ECO:0000314"/>
    <property type="project" value="UniProtKB"/>
</dbReference>
<dbReference type="GO" id="GO:0097352">
    <property type="term" value="P:autophagosome maturation"/>
    <property type="evidence" value="ECO:0000318"/>
    <property type="project" value="GO_Central"/>
</dbReference>
<dbReference type="GO" id="GO:0051228">
    <property type="term" value="P:mitotic spindle disassembly"/>
    <property type="evidence" value="ECO:0000318"/>
    <property type="project" value="GO_Central"/>
</dbReference>
<dbReference type="GO" id="GO:0043161">
    <property type="term" value="P:proteasome-mediated ubiquitin-dependent protein catabolic process"/>
    <property type="evidence" value="ECO:0000318"/>
    <property type="project" value="GO_Central"/>
</dbReference>
<dbReference type="GO" id="GO:0030970">
    <property type="term" value="P:retrograde protein transport, ER to cytosol"/>
    <property type="evidence" value="ECO:0000318"/>
    <property type="project" value="GO_Central"/>
</dbReference>
<dbReference type="GO" id="GO:0042273">
    <property type="term" value="P:ribosomal large subunit biogenesis"/>
    <property type="evidence" value="ECO:0000314"/>
    <property type="project" value="UniProtKB"/>
</dbReference>
<dbReference type="CDD" id="cd19511">
    <property type="entry name" value="RecA-like_CDC48_r2-like"/>
    <property type="match status" value="1"/>
</dbReference>
<dbReference type="FunFam" id="1.10.8.60:FF:000075">
    <property type="entry name" value="Spermatogenesis-associated protein 5-like protein 1"/>
    <property type="match status" value="1"/>
</dbReference>
<dbReference type="FunFam" id="3.40.50.300:FF:001081">
    <property type="entry name" value="Spermatogenesis-associated protein 5-like protein 1"/>
    <property type="match status" value="1"/>
</dbReference>
<dbReference type="FunFam" id="1.10.8.60:FF:000038">
    <property type="entry name" value="spermatogenesis-associated protein 5-like protein 1"/>
    <property type="match status" value="1"/>
</dbReference>
<dbReference type="FunFam" id="3.40.50.300:FF:001161">
    <property type="entry name" value="spermatogenesis-associated protein 5-like protein 1"/>
    <property type="match status" value="1"/>
</dbReference>
<dbReference type="Gene3D" id="1.10.8.60">
    <property type="match status" value="2"/>
</dbReference>
<dbReference type="Gene3D" id="3.40.50.300">
    <property type="entry name" value="P-loop containing nucleotide triphosphate hydrolases"/>
    <property type="match status" value="2"/>
</dbReference>
<dbReference type="InterPro" id="IPR003593">
    <property type="entry name" value="AAA+_ATPase"/>
</dbReference>
<dbReference type="InterPro" id="IPR050168">
    <property type="entry name" value="AAA_ATPase_domain"/>
</dbReference>
<dbReference type="InterPro" id="IPR041569">
    <property type="entry name" value="AAA_lid_3"/>
</dbReference>
<dbReference type="InterPro" id="IPR003959">
    <property type="entry name" value="ATPase_AAA_core"/>
</dbReference>
<dbReference type="InterPro" id="IPR003960">
    <property type="entry name" value="ATPase_AAA_CS"/>
</dbReference>
<dbReference type="InterPro" id="IPR027417">
    <property type="entry name" value="P-loop_NTPase"/>
</dbReference>
<dbReference type="PANTHER" id="PTHR23077">
    <property type="entry name" value="AAA-FAMILY ATPASE"/>
    <property type="match status" value="1"/>
</dbReference>
<dbReference type="PANTHER" id="PTHR23077:SF194">
    <property type="entry name" value="ATPASE FAMILY GENE 2 PROTEIN HOMOLOG B"/>
    <property type="match status" value="1"/>
</dbReference>
<dbReference type="Pfam" id="PF00004">
    <property type="entry name" value="AAA"/>
    <property type="match status" value="2"/>
</dbReference>
<dbReference type="Pfam" id="PF17862">
    <property type="entry name" value="AAA_lid_3"/>
    <property type="match status" value="2"/>
</dbReference>
<dbReference type="SMART" id="SM00382">
    <property type="entry name" value="AAA"/>
    <property type="match status" value="2"/>
</dbReference>
<dbReference type="SUPFAM" id="SSF52540">
    <property type="entry name" value="P-loop containing nucleoside triphosphate hydrolases"/>
    <property type="match status" value="2"/>
</dbReference>
<dbReference type="PROSITE" id="PS00674">
    <property type="entry name" value="AAA"/>
    <property type="match status" value="2"/>
</dbReference>
<evidence type="ECO:0000250" key="1">
    <source>
        <dbReference type="UniProtKB" id="D4A2B7"/>
    </source>
</evidence>
<evidence type="ECO:0000250" key="2">
    <source>
        <dbReference type="UniProtKB" id="P32794"/>
    </source>
</evidence>
<evidence type="ECO:0000255" key="3"/>
<evidence type="ECO:0000256" key="4">
    <source>
        <dbReference type="SAM" id="MobiDB-lite"/>
    </source>
</evidence>
<evidence type="ECO:0000269" key="5">
    <source>
    </source>
</evidence>
<evidence type="ECO:0000269" key="6">
    <source>
    </source>
</evidence>
<evidence type="ECO:0000269" key="7">
    <source>
    </source>
</evidence>
<evidence type="ECO:0000269" key="8">
    <source>
    </source>
</evidence>
<evidence type="ECO:0000269" key="9">
    <source>
    </source>
</evidence>
<evidence type="ECO:0000269" key="10">
    <source>
    </source>
</evidence>
<evidence type="ECO:0000303" key="11">
    <source>
    </source>
</evidence>
<evidence type="ECO:0000303" key="12">
    <source>
    </source>
</evidence>
<evidence type="ECO:0000305" key="13"/>
<evidence type="ECO:0000305" key="14">
    <source>
    </source>
</evidence>
<evidence type="ECO:0000312" key="15">
    <source>
        <dbReference type="HGNC" id="HGNC:28762"/>
    </source>
</evidence>
<evidence type="ECO:0007744" key="16">
    <source>
    </source>
</evidence>
<accession>Q9BVQ7</accession>
<accession>C9JHR5</accession>
<accession>Q9H8W7</accession>
<accession>Q9HA41</accession>